<feature type="chain" id="PRO_0000068721" description="Carnitine operon protein CaiE">
    <location>
        <begin position="1"/>
        <end position="196"/>
    </location>
</feature>
<feature type="region of interest" description="Disordered" evidence="2">
    <location>
        <begin position="173"/>
        <end position="196"/>
    </location>
</feature>
<feature type="compositionally biased region" description="Polar residues" evidence="2">
    <location>
        <begin position="187"/>
        <end position="196"/>
    </location>
</feature>
<protein>
    <recommendedName>
        <fullName evidence="1">Carnitine operon protein CaiE</fullName>
    </recommendedName>
</protein>
<accession>Q8XA36</accession>
<accession>Q7AHT1</accession>
<gene>
    <name evidence="1" type="primary">caiE</name>
    <name type="ordered locus">Z0041</name>
    <name type="ordered locus">ECs0038</name>
</gene>
<comment type="function">
    <text evidence="1">Overproduction of CaiE stimulates the activity of CaiB and CaiD.</text>
</comment>
<comment type="pathway">
    <text evidence="1">Amine and polyamine metabolism; carnitine metabolism.</text>
</comment>
<comment type="similarity">
    <text evidence="1">Belongs to the transferase hexapeptide repeat family.</text>
</comment>
<comment type="sequence caution" evidence="3">
    <conflict type="erroneous initiation">
        <sequence resource="EMBL-CDS" id="AAG54338"/>
    </conflict>
    <text>Extended N-terminus.</text>
</comment>
<evidence type="ECO:0000255" key="1">
    <source>
        <dbReference type="HAMAP-Rule" id="MF_01525"/>
    </source>
</evidence>
<evidence type="ECO:0000256" key="2">
    <source>
        <dbReference type="SAM" id="MobiDB-lite"/>
    </source>
</evidence>
<evidence type="ECO:0000305" key="3"/>
<reference key="1">
    <citation type="journal article" date="2001" name="Nature">
        <title>Genome sequence of enterohaemorrhagic Escherichia coli O157:H7.</title>
        <authorList>
            <person name="Perna N.T."/>
            <person name="Plunkett G. III"/>
            <person name="Burland V."/>
            <person name="Mau B."/>
            <person name="Glasner J.D."/>
            <person name="Rose D.J."/>
            <person name="Mayhew G.F."/>
            <person name="Evans P.S."/>
            <person name="Gregor J."/>
            <person name="Kirkpatrick H.A."/>
            <person name="Posfai G."/>
            <person name="Hackett J."/>
            <person name="Klink S."/>
            <person name="Boutin A."/>
            <person name="Shao Y."/>
            <person name="Miller L."/>
            <person name="Grotbeck E.J."/>
            <person name="Davis N.W."/>
            <person name="Lim A."/>
            <person name="Dimalanta E.T."/>
            <person name="Potamousis K."/>
            <person name="Apodaca J."/>
            <person name="Anantharaman T.S."/>
            <person name="Lin J."/>
            <person name="Yen G."/>
            <person name="Schwartz D.C."/>
            <person name="Welch R.A."/>
            <person name="Blattner F.R."/>
        </authorList>
    </citation>
    <scope>NUCLEOTIDE SEQUENCE [LARGE SCALE GENOMIC DNA]</scope>
    <source>
        <strain>O157:H7 / EDL933 / ATCC 700927 / EHEC</strain>
    </source>
</reference>
<reference key="2">
    <citation type="journal article" date="2001" name="DNA Res.">
        <title>Complete genome sequence of enterohemorrhagic Escherichia coli O157:H7 and genomic comparison with a laboratory strain K-12.</title>
        <authorList>
            <person name="Hayashi T."/>
            <person name="Makino K."/>
            <person name="Ohnishi M."/>
            <person name="Kurokawa K."/>
            <person name="Ishii K."/>
            <person name="Yokoyama K."/>
            <person name="Han C.-G."/>
            <person name="Ohtsubo E."/>
            <person name="Nakayama K."/>
            <person name="Murata T."/>
            <person name="Tanaka M."/>
            <person name="Tobe T."/>
            <person name="Iida T."/>
            <person name="Takami H."/>
            <person name="Honda T."/>
            <person name="Sasakawa C."/>
            <person name="Ogasawara N."/>
            <person name="Yasunaga T."/>
            <person name="Kuhara S."/>
            <person name="Shiba T."/>
            <person name="Hattori M."/>
            <person name="Shinagawa H."/>
        </authorList>
    </citation>
    <scope>NUCLEOTIDE SEQUENCE [LARGE SCALE GENOMIC DNA]</scope>
    <source>
        <strain>O157:H7 / Sakai / RIMD 0509952 / EHEC</strain>
    </source>
</reference>
<sequence>MSYYAFEGLIPVVHPTAFVHPSAVLIGDVIVGAGVYIGPLASLRGDYGRLIVQAGANIQDGCIMHGYTDTDTIVGENGHIGHGAILHGCVIGRDALVGMNSVIMDGAVIGEESIVAAMSFVKAGFHGEKRQLLMGTPARAVRSVSDDELHWKRLNTKEYQDLVGRCHASLHETQPLRQMEENRPRLQGTTDVTPKR</sequence>
<name>CAIE_ECO57</name>
<keyword id="KW-1185">Reference proteome</keyword>
<keyword id="KW-0677">Repeat</keyword>
<keyword id="KW-0808">Transferase</keyword>
<proteinExistence type="inferred from homology"/>
<dbReference type="EMBL" id="AE005174">
    <property type="protein sequence ID" value="AAG54338.1"/>
    <property type="status" value="ALT_INIT"/>
    <property type="molecule type" value="Genomic_DNA"/>
</dbReference>
<dbReference type="EMBL" id="BA000007">
    <property type="protein sequence ID" value="BAB33461.2"/>
    <property type="molecule type" value="Genomic_DNA"/>
</dbReference>
<dbReference type="PIR" id="F85484">
    <property type="entry name" value="F85484"/>
</dbReference>
<dbReference type="PIR" id="F90633">
    <property type="entry name" value="F90633"/>
</dbReference>
<dbReference type="RefSeq" id="NP_308065.1">
    <property type="nucleotide sequence ID" value="NC_002695.1"/>
</dbReference>
<dbReference type="RefSeq" id="WP_000122894.1">
    <property type="nucleotide sequence ID" value="NZ_VOAI01000002.1"/>
</dbReference>
<dbReference type="SMR" id="Q8XA36"/>
<dbReference type="STRING" id="155864.Z0041"/>
<dbReference type="GeneID" id="913434"/>
<dbReference type="KEGG" id="ece:Z0041"/>
<dbReference type="KEGG" id="ecs:ECs_0038"/>
<dbReference type="PATRIC" id="fig|386585.9.peg.135"/>
<dbReference type="eggNOG" id="COG0663">
    <property type="taxonomic scope" value="Bacteria"/>
</dbReference>
<dbReference type="HOGENOM" id="CLU_064827_4_2_6"/>
<dbReference type="OMA" id="MPCYRLD"/>
<dbReference type="UniPathway" id="UPA00117"/>
<dbReference type="Proteomes" id="UP000000558">
    <property type="component" value="Chromosome"/>
</dbReference>
<dbReference type="Proteomes" id="UP000002519">
    <property type="component" value="Chromosome"/>
</dbReference>
<dbReference type="GO" id="GO:0016740">
    <property type="term" value="F:transferase activity"/>
    <property type="evidence" value="ECO:0007669"/>
    <property type="project" value="UniProtKB-KW"/>
</dbReference>
<dbReference type="GO" id="GO:0009437">
    <property type="term" value="P:carnitine metabolic process"/>
    <property type="evidence" value="ECO:0007669"/>
    <property type="project" value="UniProtKB-UniRule"/>
</dbReference>
<dbReference type="CDD" id="cd04745">
    <property type="entry name" value="LbH_paaY_like"/>
    <property type="match status" value="1"/>
</dbReference>
<dbReference type="FunFam" id="2.160.10.10:FF:000012">
    <property type="entry name" value="Carnitine operon protein CaiE"/>
    <property type="match status" value="1"/>
</dbReference>
<dbReference type="Gene3D" id="2.160.10.10">
    <property type="entry name" value="Hexapeptide repeat proteins"/>
    <property type="match status" value="1"/>
</dbReference>
<dbReference type="HAMAP" id="MF_01525">
    <property type="entry name" value="CaiE"/>
    <property type="match status" value="1"/>
</dbReference>
<dbReference type="InterPro" id="IPR023446">
    <property type="entry name" value="CaiE"/>
</dbReference>
<dbReference type="InterPro" id="IPR001451">
    <property type="entry name" value="Hexapep"/>
</dbReference>
<dbReference type="InterPro" id="IPR050484">
    <property type="entry name" value="Transf_Hexapept/Carb_Anhydrase"/>
</dbReference>
<dbReference type="InterPro" id="IPR011004">
    <property type="entry name" value="Trimer_LpxA-like_sf"/>
</dbReference>
<dbReference type="NCBIfam" id="NF010150">
    <property type="entry name" value="PRK13627.1"/>
    <property type="match status" value="1"/>
</dbReference>
<dbReference type="PANTHER" id="PTHR13061">
    <property type="entry name" value="DYNACTIN SUBUNIT P25"/>
    <property type="match status" value="1"/>
</dbReference>
<dbReference type="PANTHER" id="PTHR13061:SF29">
    <property type="entry name" value="GAMMA CARBONIC ANHYDRASE-LIKE 1, MITOCHONDRIAL-RELATED"/>
    <property type="match status" value="1"/>
</dbReference>
<dbReference type="Pfam" id="PF00132">
    <property type="entry name" value="Hexapep"/>
    <property type="match status" value="1"/>
</dbReference>
<dbReference type="SUPFAM" id="SSF51161">
    <property type="entry name" value="Trimeric LpxA-like enzymes"/>
    <property type="match status" value="1"/>
</dbReference>
<organism>
    <name type="scientific">Escherichia coli O157:H7</name>
    <dbReference type="NCBI Taxonomy" id="83334"/>
    <lineage>
        <taxon>Bacteria</taxon>
        <taxon>Pseudomonadati</taxon>
        <taxon>Pseudomonadota</taxon>
        <taxon>Gammaproteobacteria</taxon>
        <taxon>Enterobacterales</taxon>
        <taxon>Enterobacteriaceae</taxon>
        <taxon>Escherichia</taxon>
    </lineage>
</organism>